<name>YIF9_YEAST</name>
<comment type="PTM">
    <text evidence="2">N-glycosylated.</text>
</comment>
<proteinExistence type="evidence at protein level"/>
<feature type="signal peptide" evidence="1 3">
    <location>
        <begin position="1"/>
        <end position="23"/>
    </location>
</feature>
<feature type="chain" id="PRO_0000202985" description="Uncharacterized protein YIL059C">
    <location>
        <begin position="24"/>
        <end position="121"/>
    </location>
</feature>
<feature type="glycosylation site" description="N-linked (GlcNAc...) asparagine" evidence="1">
    <location>
        <position position="68"/>
    </location>
</feature>
<feature type="glycosylation site" description="N-linked (GlcNAc...) asparagine" evidence="1">
    <location>
        <position position="84"/>
    </location>
</feature>
<evidence type="ECO:0000255" key="1"/>
<evidence type="ECO:0000269" key="2">
    <source>
    </source>
</evidence>
<evidence type="ECO:0000305" key="3">
    <source>
    </source>
</evidence>
<reference key="1">
    <citation type="journal article" date="1997" name="Nature">
        <title>The nucleotide sequence of Saccharomyces cerevisiae chromosome IX.</title>
        <authorList>
            <person name="Churcher C.M."/>
            <person name="Bowman S."/>
            <person name="Badcock K."/>
            <person name="Bankier A.T."/>
            <person name="Brown D."/>
            <person name="Chillingworth T."/>
            <person name="Connor R."/>
            <person name="Devlin K."/>
            <person name="Gentles S."/>
            <person name="Hamlin N."/>
            <person name="Harris D.E."/>
            <person name="Horsnell T."/>
            <person name="Hunt S."/>
            <person name="Jagels K."/>
            <person name="Jones M."/>
            <person name="Lye G."/>
            <person name="Moule S."/>
            <person name="Odell C."/>
            <person name="Pearson D."/>
            <person name="Rajandream M.A."/>
            <person name="Rice P."/>
            <person name="Rowley N."/>
            <person name="Skelton J."/>
            <person name="Smith V."/>
            <person name="Walsh S.V."/>
            <person name="Whitehead S."/>
            <person name="Barrell B.G."/>
        </authorList>
    </citation>
    <scope>NUCLEOTIDE SEQUENCE [LARGE SCALE GENOMIC DNA]</scope>
    <source>
        <strain>ATCC 204508 / S288c</strain>
    </source>
</reference>
<reference key="2">
    <citation type="journal article" date="2014" name="G3 (Bethesda)">
        <title>The reference genome sequence of Saccharomyces cerevisiae: Then and now.</title>
        <authorList>
            <person name="Engel S.R."/>
            <person name="Dietrich F.S."/>
            <person name="Fisk D.G."/>
            <person name="Binkley G."/>
            <person name="Balakrishnan R."/>
            <person name="Costanzo M.C."/>
            <person name="Dwight S.S."/>
            <person name="Hitz B.C."/>
            <person name="Karra K."/>
            <person name="Nash R.S."/>
            <person name="Weng S."/>
            <person name="Wong E.D."/>
            <person name="Lloyd P."/>
            <person name="Skrzypek M.S."/>
            <person name="Miyasato S.R."/>
            <person name="Simison M."/>
            <person name="Cherry J.M."/>
        </authorList>
    </citation>
    <scope>GENOME REANNOTATION</scope>
    <source>
        <strain>ATCC 204508 / S288c</strain>
    </source>
</reference>
<reference key="3">
    <citation type="journal article" date="2007" name="Genome Res.">
        <title>Approaching a complete repository of sequence-verified protein-encoding clones for Saccharomyces cerevisiae.</title>
        <authorList>
            <person name="Hu Y."/>
            <person name="Rolfs A."/>
            <person name="Bhullar B."/>
            <person name="Murthy T.V.S."/>
            <person name="Zhu C."/>
            <person name="Berger M.F."/>
            <person name="Camargo A.A."/>
            <person name="Kelley F."/>
            <person name="McCarron S."/>
            <person name="Jepson D."/>
            <person name="Richardson A."/>
            <person name="Raphael J."/>
            <person name="Moreira D."/>
            <person name="Taycher E."/>
            <person name="Zuo D."/>
            <person name="Mohr S."/>
            <person name="Kane M.F."/>
            <person name="Williamson J."/>
            <person name="Simpson A.J.G."/>
            <person name="Bulyk M.L."/>
            <person name="Harlow E."/>
            <person name="Marsischky G."/>
            <person name="Kolodner R.D."/>
            <person name="LaBaer J."/>
        </authorList>
    </citation>
    <scope>NUCLEOTIDE SEQUENCE [GENOMIC DNA]</scope>
    <source>
        <strain>ATCC 204508 / S288c</strain>
    </source>
</reference>
<reference key="4">
    <citation type="journal article" date="2009" name="Mol. Syst. Biol.">
        <title>Global analysis of the glycoproteome in Saccharomyces cerevisiae reveals new roles for protein glycosylation in eukaryotes.</title>
        <authorList>
            <person name="Kung L.A."/>
            <person name="Tao S.-C."/>
            <person name="Qian J."/>
            <person name="Smith M.G."/>
            <person name="Snyder M."/>
            <person name="Zhu H."/>
        </authorList>
    </citation>
    <scope>GLYCOSYLATION [LARGE SCALE ANALYSIS]</scope>
</reference>
<reference key="5">
    <citation type="journal article" date="2023" name="PLoS Biol.">
        <title>Biological factors and statistical limitations prevent detection of most noncanonical proteins by mass spectrometry.</title>
        <authorList>
            <person name="Wacholder A."/>
            <person name="Carvunis A.R."/>
        </authorList>
    </citation>
    <scope>IDENTIFICATION BY MASS SPECTROMETRY</scope>
</reference>
<protein>
    <recommendedName>
        <fullName>Uncharacterized protein YIL059C</fullName>
    </recommendedName>
</protein>
<gene>
    <name type="ordered locus">YIL059C</name>
</gene>
<dbReference type="EMBL" id="Z38060">
    <property type="protein sequence ID" value="CAA86164.1"/>
    <property type="molecule type" value="Genomic_DNA"/>
</dbReference>
<dbReference type="EMBL" id="AY693258">
    <property type="protein sequence ID" value="AAT93277.1"/>
    <property type="molecule type" value="Genomic_DNA"/>
</dbReference>
<dbReference type="EMBL" id="BK006942">
    <property type="status" value="NOT_ANNOTATED_CDS"/>
    <property type="molecule type" value="Genomic_DNA"/>
</dbReference>
<dbReference type="PIR" id="S48420">
    <property type="entry name" value="S48420"/>
</dbReference>
<dbReference type="RefSeq" id="NP_001418069.1">
    <property type="nucleotide sequence ID" value="NM_001431140.1"/>
</dbReference>
<dbReference type="DIP" id="DIP-4712N"/>
<dbReference type="FunCoup" id="P40520">
    <property type="interactions" value="2"/>
</dbReference>
<dbReference type="IntAct" id="P40520">
    <property type="interactions" value="1"/>
</dbReference>
<dbReference type="GlyGen" id="P40520">
    <property type="glycosylation" value="3 sites"/>
</dbReference>
<dbReference type="PaxDb" id="4932-YIL059C"/>
<dbReference type="EnsemblFungi" id="YIL059C_mRNA">
    <property type="protein sequence ID" value="YIL059C"/>
    <property type="gene ID" value="YIL059C"/>
</dbReference>
<dbReference type="GeneID" id="854752"/>
<dbReference type="AGR" id="SGD:S000001321"/>
<dbReference type="SGD" id="S000001321">
    <property type="gene designation" value="YIL059C"/>
</dbReference>
<dbReference type="HOGENOM" id="CLU_2039899_0_0_1"/>
<dbReference type="InParanoid" id="P40520"/>
<dbReference type="OMA" id="REYSGCG"/>
<dbReference type="PRO" id="PR:P40520"/>
<dbReference type="Proteomes" id="UP000002311">
    <property type="component" value="Chromosome IX"/>
</dbReference>
<dbReference type="RNAct" id="P40520">
    <property type="molecule type" value="protein"/>
</dbReference>
<keyword id="KW-0325">Glycoprotein</keyword>
<keyword id="KW-1185">Reference proteome</keyword>
<keyword id="KW-0732">Signal</keyword>
<accession>P40520</accession>
<organism>
    <name type="scientific">Saccharomyces cerevisiae (strain ATCC 204508 / S288c)</name>
    <name type="common">Baker's yeast</name>
    <dbReference type="NCBI Taxonomy" id="559292"/>
    <lineage>
        <taxon>Eukaryota</taxon>
        <taxon>Fungi</taxon>
        <taxon>Dikarya</taxon>
        <taxon>Ascomycota</taxon>
        <taxon>Saccharomycotina</taxon>
        <taxon>Saccharomycetes</taxon>
        <taxon>Saccharomycetales</taxon>
        <taxon>Saccharomycetaceae</taxon>
        <taxon>Saccharomyces</taxon>
    </lineage>
</organism>
<sequence length="121" mass="13030">MNFSTVFQAIIAVLGLTTVTALAEFDFDVGYEEFVRTNPDTIFLESDIGLHVGYTEGGERQIATIPHNSTLGTSLREYSGCGGNGTETSIATPAPTMSEVPIATFVKRRKSVPILLPQVCM</sequence>